<evidence type="ECO:0000255" key="1">
    <source>
        <dbReference type="HAMAP-Rule" id="MF_00441"/>
    </source>
</evidence>
<keyword id="KW-0472">Membrane</keyword>
<keyword id="KW-0602">Photosynthesis</keyword>
<keyword id="KW-0604">Photosystem II</keyword>
<keyword id="KW-0674">Reaction center</keyword>
<keyword id="KW-1185">Reference proteome</keyword>
<keyword id="KW-0793">Thylakoid</keyword>
<keyword id="KW-0812">Transmembrane</keyword>
<keyword id="KW-1133">Transmembrane helix</keyword>
<protein>
    <recommendedName>
        <fullName evidence="1">Photosystem II reaction center protein K</fullName>
        <shortName evidence="1">PSII-K</shortName>
    </recommendedName>
</protein>
<dbReference type="EMBL" id="BA000019">
    <property type="protein sequence ID" value="BAB72842.1"/>
    <property type="molecule type" value="Genomic_DNA"/>
</dbReference>
<dbReference type="PIR" id="AB1917">
    <property type="entry name" value="AB1917"/>
</dbReference>
<dbReference type="RefSeq" id="WP_010995059.1">
    <property type="nucleotide sequence ID" value="NZ_RSCN01000006.1"/>
</dbReference>
<dbReference type="SMR" id="Q8YYG5"/>
<dbReference type="STRING" id="103690.gene:10492898"/>
<dbReference type="KEGG" id="ana:asl0885"/>
<dbReference type="eggNOG" id="ENOG5032YQR">
    <property type="taxonomic scope" value="Bacteria"/>
</dbReference>
<dbReference type="OrthoDB" id="532552at2"/>
<dbReference type="Proteomes" id="UP000002483">
    <property type="component" value="Chromosome"/>
</dbReference>
<dbReference type="GO" id="GO:0009539">
    <property type="term" value="C:photosystem II reaction center"/>
    <property type="evidence" value="ECO:0007669"/>
    <property type="project" value="InterPro"/>
</dbReference>
<dbReference type="GO" id="GO:0031676">
    <property type="term" value="C:plasma membrane-derived thylakoid membrane"/>
    <property type="evidence" value="ECO:0007669"/>
    <property type="project" value="UniProtKB-SubCell"/>
</dbReference>
<dbReference type="GO" id="GO:0015979">
    <property type="term" value="P:photosynthesis"/>
    <property type="evidence" value="ECO:0007669"/>
    <property type="project" value="UniProtKB-UniRule"/>
</dbReference>
<dbReference type="HAMAP" id="MF_00441">
    <property type="entry name" value="PSII_PsbK"/>
    <property type="match status" value="1"/>
</dbReference>
<dbReference type="InterPro" id="IPR003687">
    <property type="entry name" value="PSII_PsbK"/>
</dbReference>
<dbReference type="InterPro" id="IPR037270">
    <property type="entry name" value="PSII_PsbK_sf"/>
</dbReference>
<dbReference type="NCBIfam" id="NF002715">
    <property type="entry name" value="PRK02553.1"/>
    <property type="match status" value="1"/>
</dbReference>
<dbReference type="PANTHER" id="PTHR35325">
    <property type="match status" value="1"/>
</dbReference>
<dbReference type="PANTHER" id="PTHR35325:SF1">
    <property type="entry name" value="PHOTOSYSTEM II REACTION CENTER PROTEIN K"/>
    <property type="match status" value="1"/>
</dbReference>
<dbReference type="Pfam" id="PF02533">
    <property type="entry name" value="PsbK"/>
    <property type="match status" value="1"/>
</dbReference>
<dbReference type="SUPFAM" id="SSF161037">
    <property type="entry name" value="Photosystem II reaction center protein K, PsbK"/>
    <property type="match status" value="1"/>
</dbReference>
<comment type="function">
    <text evidence="1">One of the components of the core complex of photosystem II (PSII). PSII is a light-driven water:plastoquinone oxidoreductase that uses light energy to abstract electrons from H(2)O, generating O(2) and a proton gradient subsequently used for ATP formation. It consists of a core antenna complex that captures photons, and an electron transfer chain that converts photonic excitation into a charge separation.</text>
</comment>
<comment type="subunit">
    <text evidence="1">PSII is composed of 1 copy each of membrane proteins PsbA, PsbB, PsbC, PsbD, PsbE, PsbF, PsbH, PsbI, PsbJ, PsbK, PsbL, PsbM, PsbT, PsbX, PsbY, PsbZ, Psb30/Ycf12, peripheral proteins PsbO, CyanoQ (PsbQ), PsbU, PsbV and a large number of cofactors. It forms dimeric complexes.</text>
</comment>
<comment type="subcellular location">
    <subcellularLocation>
        <location evidence="1">Cellular thylakoid membrane</location>
        <topology evidence="1">Single-pass membrane protein</topology>
    </subcellularLocation>
</comment>
<comment type="similarity">
    <text evidence="1">Belongs to the PsbK family.</text>
</comment>
<feature type="propeptide" id="PRO_0000029535" evidence="1">
    <location>
        <begin position="1"/>
        <end position="8"/>
    </location>
</feature>
<feature type="chain" id="PRO_0000029536" description="Photosystem II reaction center protein K" evidence="1">
    <location>
        <begin position="9"/>
        <end position="45"/>
    </location>
</feature>
<feature type="transmembrane region" description="Helical" evidence="1">
    <location>
        <begin position="24"/>
        <end position="44"/>
    </location>
</feature>
<proteinExistence type="inferred from homology"/>
<gene>
    <name evidence="1" type="primary">psbK</name>
    <name type="ordered locus">asl0885</name>
</gene>
<accession>Q8YYG5</accession>
<sequence>MEAALLLAKLPEAYQIFDPLVDVLPIIPVFFLLLAFVWQAAVGFR</sequence>
<organism>
    <name type="scientific">Nostoc sp. (strain PCC 7120 / SAG 25.82 / UTEX 2576)</name>
    <dbReference type="NCBI Taxonomy" id="103690"/>
    <lineage>
        <taxon>Bacteria</taxon>
        <taxon>Bacillati</taxon>
        <taxon>Cyanobacteriota</taxon>
        <taxon>Cyanophyceae</taxon>
        <taxon>Nostocales</taxon>
        <taxon>Nostocaceae</taxon>
        <taxon>Nostoc</taxon>
    </lineage>
</organism>
<name>PSBK_NOSS1</name>
<reference key="1">
    <citation type="journal article" date="2001" name="DNA Res.">
        <title>Complete genomic sequence of the filamentous nitrogen-fixing cyanobacterium Anabaena sp. strain PCC 7120.</title>
        <authorList>
            <person name="Kaneko T."/>
            <person name="Nakamura Y."/>
            <person name="Wolk C.P."/>
            <person name="Kuritz T."/>
            <person name="Sasamoto S."/>
            <person name="Watanabe A."/>
            <person name="Iriguchi M."/>
            <person name="Ishikawa A."/>
            <person name="Kawashima K."/>
            <person name="Kimura T."/>
            <person name="Kishida Y."/>
            <person name="Kohara M."/>
            <person name="Matsumoto M."/>
            <person name="Matsuno A."/>
            <person name="Muraki A."/>
            <person name="Nakazaki N."/>
            <person name="Shimpo S."/>
            <person name="Sugimoto M."/>
            <person name="Takazawa M."/>
            <person name="Yamada M."/>
            <person name="Yasuda M."/>
            <person name="Tabata S."/>
        </authorList>
    </citation>
    <scope>NUCLEOTIDE SEQUENCE [LARGE SCALE GENOMIC DNA]</scope>
    <source>
        <strain>PCC 7120 / SAG 25.82 / UTEX 2576</strain>
    </source>
</reference>